<dbReference type="EC" id="6.1.1.14" evidence="1"/>
<dbReference type="EMBL" id="CP000026">
    <property type="protein sequence ID" value="AAV79312.1"/>
    <property type="molecule type" value="Genomic_DNA"/>
</dbReference>
<dbReference type="RefSeq" id="WP_001168556.1">
    <property type="nucleotide sequence ID" value="NC_006511.1"/>
</dbReference>
<dbReference type="SMR" id="Q5PLN1"/>
<dbReference type="KEGG" id="spt:SPA3507"/>
<dbReference type="HOGENOM" id="CLU_057066_1_0_6"/>
<dbReference type="Proteomes" id="UP000008185">
    <property type="component" value="Chromosome"/>
</dbReference>
<dbReference type="GO" id="GO:0005829">
    <property type="term" value="C:cytosol"/>
    <property type="evidence" value="ECO:0007669"/>
    <property type="project" value="TreeGrafter"/>
</dbReference>
<dbReference type="GO" id="GO:0005524">
    <property type="term" value="F:ATP binding"/>
    <property type="evidence" value="ECO:0007669"/>
    <property type="project" value="UniProtKB-UniRule"/>
</dbReference>
<dbReference type="GO" id="GO:0004820">
    <property type="term" value="F:glycine-tRNA ligase activity"/>
    <property type="evidence" value="ECO:0007669"/>
    <property type="project" value="UniProtKB-UniRule"/>
</dbReference>
<dbReference type="GO" id="GO:0006426">
    <property type="term" value="P:glycyl-tRNA aminoacylation"/>
    <property type="evidence" value="ECO:0007669"/>
    <property type="project" value="UniProtKB-UniRule"/>
</dbReference>
<dbReference type="CDD" id="cd00733">
    <property type="entry name" value="GlyRS_alpha_core"/>
    <property type="match status" value="1"/>
</dbReference>
<dbReference type="FunFam" id="1.20.58.180:FF:000001">
    <property type="entry name" value="Glycine--tRNA ligase alpha subunit"/>
    <property type="match status" value="1"/>
</dbReference>
<dbReference type="FunFam" id="3.30.930.10:FF:000006">
    <property type="entry name" value="Glycine--tRNA ligase alpha subunit"/>
    <property type="match status" value="1"/>
</dbReference>
<dbReference type="Gene3D" id="3.30.930.10">
    <property type="entry name" value="Bira Bifunctional Protein, Domain 2"/>
    <property type="match status" value="1"/>
</dbReference>
<dbReference type="Gene3D" id="1.20.58.180">
    <property type="entry name" value="Class II aaRS and biotin synthetases, domain 2"/>
    <property type="match status" value="1"/>
</dbReference>
<dbReference type="HAMAP" id="MF_00254">
    <property type="entry name" value="Gly_tRNA_synth_alpha"/>
    <property type="match status" value="1"/>
</dbReference>
<dbReference type="InterPro" id="IPR045864">
    <property type="entry name" value="aa-tRNA-synth_II/BPL/LPL"/>
</dbReference>
<dbReference type="InterPro" id="IPR006194">
    <property type="entry name" value="Gly-tRNA-synth_heterodimer"/>
</dbReference>
<dbReference type="InterPro" id="IPR002310">
    <property type="entry name" value="Gly-tRNA_ligase_asu"/>
</dbReference>
<dbReference type="NCBIfam" id="TIGR00388">
    <property type="entry name" value="glyQ"/>
    <property type="match status" value="1"/>
</dbReference>
<dbReference type="NCBIfam" id="NF006827">
    <property type="entry name" value="PRK09348.1"/>
    <property type="match status" value="1"/>
</dbReference>
<dbReference type="PANTHER" id="PTHR30075:SF2">
    <property type="entry name" value="GLYCINE--TRNA LIGASE, CHLOROPLASTIC_MITOCHONDRIAL 2"/>
    <property type="match status" value="1"/>
</dbReference>
<dbReference type="PANTHER" id="PTHR30075">
    <property type="entry name" value="GLYCYL-TRNA SYNTHETASE"/>
    <property type="match status" value="1"/>
</dbReference>
<dbReference type="Pfam" id="PF02091">
    <property type="entry name" value="tRNA-synt_2e"/>
    <property type="match status" value="1"/>
</dbReference>
<dbReference type="PRINTS" id="PR01044">
    <property type="entry name" value="TRNASYNTHGA"/>
</dbReference>
<dbReference type="SUPFAM" id="SSF55681">
    <property type="entry name" value="Class II aaRS and biotin synthetases"/>
    <property type="match status" value="1"/>
</dbReference>
<dbReference type="PROSITE" id="PS50861">
    <property type="entry name" value="AA_TRNA_LIGASE_II_GLYAB"/>
    <property type="match status" value="1"/>
</dbReference>
<protein>
    <recommendedName>
        <fullName evidence="1">Glycine--tRNA ligase alpha subunit</fullName>
        <ecNumber evidence="1">6.1.1.14</ecNumber>
    </recommendedName>
    <alternativeName>
        <fullName evidence="1">Glycyl-tRNA synthetase alpha subunit</fullName>
        <shortName evidence="1">GlyRS</shortName>
    </alternativeName>
</protein>
<gene>
    <name evidence="1" type="primary">glyQ</name>
    <name type="ordered locus">SPA3507</name>
</gene>
<accession>Q5PLN1</accession>
<reference key="1">
    <citation type="journal article" date="2004" name="Nat. Genet.">
        <title>Comparison of genome degradation in Paratyphi A and Typhi, human-restricted serovars of Salmonella enterica that cause typhoid.</title>
        <authorList>
            <person name="McClelland M."/>
            <person name="Sanderson K.E."/>
            <person name="Clifton S.W."/>
            <person name="Latreille P."/>
            <person name="Porwollik S."/>
            <person name="Sabo A."/>
            <person name="Meyer R."/>
            <person name="Bieri T."/>
            <person name="Ozersky P."/>
            <person name="McLellan M."/>
            <person name="Harkins C.R."/>
            <person name="Wang C."/>
            <person name="Nguyen C."/>
            <person name="Berghoff A."/>
            <person name="Elliott G."/>
            <person name="Kohlberg S."/>
            <person name="Strong C."/>
            <person name="Du F."/>
            <person name="Carter J."/>
            <person name="Kremizki C."/>
            <person name="Layman D."/>
            <person name="Leonard S."/>
            <person name="Sun H."/>
            <person name="Fulton L."/>
            <person name="Nash W."/>
            <person name="Miner T."/>
            <person name="Minx P."/>
            <person name="Delehaunty K."/>
            <person name="Fronick C."/>
            <person name="Magrini V."/>
            <person name="Nhan M."/>
            <person name="Warren W."/>
            <person name="Florea L."/>
            <person name="Spieth J."/>
            <person name="Wilson R.K."/>
        </authorList>
    </citation>
    <scope>NUCLEOTIDE SEQUENCE [LARGE SCALE GENOMIC DNA]</scope>
    <source>
        <strain>ATCC 9150 / SARB42</strain>
    </source>
</reference>
<proteinExistence type="inferred from homology"/>
<feature type="chain" id="PRO_1000047481" description="Glycine--tRNA ligase alpha subunit">
    <location>
        <begin position="1"/>
        <end position="303"/>
    </location>
</feature>
<comment type="catalytic activity">
    <reaction evidence="1">
        <text>tRNA(Gly) + glycine + ATP = glycyl-tRNA(Gly) + AMP + diphosphate</text>
        <dbReference type="Rhea" id="RHEA:16013"/>
        <dbReference type="Rhea" id="RHEA-COMP:9664"/>
        <dbReference type="Rhea" id="RHEA-COMP:9683"/>
        <dbReference type="ChEBI" id="CHEBI:30616"/>
        <dbReference type="ChEBI" id="CHEBI:33019"/>
        <dbReference type="ChEBI" id="CHEBI:57305"/>
        <dbReference type="ChEBI" id="CHEBI:78442"/>
        <dbReference type="ChEBI" id="CHEBI:78522"/>
        <dbReference type="ChEBI" id="CHEBI:456215"/>
        <dbReference type="EC" id="6.1.1.14"/>
    </reaction>
</comment>
<comment type="subunit">
    <text evidence="1">Tetramer of two alpha and two beta subunits.</text>
</comment>
<comment type="subcellular location">
    <subcellularLocation>
        <location evidence="1">Cytoplasm</location>
    </subcellularLocation>
</comment>
<comment type="similarity">
    <text evidence="1">Belongs to the class-II aminoacyl-tRNA synthetase family.</text>
</comment>
<name>SYGA_SALPA</name>
<evidence type="ECO:0000255" key="1">
    <source>
        <dbReference type="HAMAP-Rule" id="MF_00254"/>
    </source>
</evidence>
<sequence length="303" mass="34760">MQKFDTRTFQGLILTLQDYWARQGCTIVQPLDMEVGAGTSHPMTCLRALGPEPMATAYVQPSRRPTDGRYGENPNRLQHYYQFQVVIKPSPENIQELYLGSLKELGMDPTIHDIRFVEDNWENPTLGAWGLGWEVWLNGMEVTQFTYFQQVGGLECKPVTGEITYGLERLAMYIQGVDSVYDLVWSDGPLGKTTYGDVFHQNEVEQSTYNFEYADVDFLFTCFEQYEKEAQQLLALENPLPLPAYERILKAAHSFNLLDARKAISVTERQRYILRIRTLTKAVAEAYYASREALGFPMCNKDK</sequence>
<organism>
    <name type="scientific">Salmonella paratyphi A (strain ATCC 9150 / SARB42)</name>
    <dbReference type="NCBI Taxonomy" id="295319"/>
    <lineage>
        <taxon>Bacteria</taxon>
        <taxon>Pseudomonadati</taxon>
        <taxon>Pseudomonadota</taxon>
        <taxon>Gammaproteobacteria</taxon>
        <taxon>Enterobacterales</taxon>
        <taxon>Enterobacteriaceae</taxon>
        <taxon>Salmonella</taxon>
    </lineage>
</organism>
<keyword id="KW-0030">Aminoacyl-tRNA synthetase</keyword>
<keyword id="KW-0067">ATP-binding</keyword>
<keyword id="KW-0963">Cytoplasm</keyword>
<keyword id="KW-0436">Ligase</keyword>
<keyword id="KW-0547">Nucleotide-binding</keyword>
<keyword id="KW-0648">Protein biosynthesis</keyword>